<keyword id="KW-0028">Amino-acid biosynthesis</keyword>
<keyword id="KW-0057">Aromatic amino acid biosynthesis</keyword>
<keyword id="KW-0456">Lyase</keyword>
<dbReference type="EC" id="4.2.1.10" evidence="1"/>
<dbReference type="EMBL" id="CP000110">
    <property type="protein sequence ID" value="ABB34276.1"/>
    <property type="molecule type" value="Genomic_DNA"/>
</dbReference>
<dbReference type="RefSeq" id="WP_011363508.1">
    <property type="nucleotide sequence ID" value="NC_007516.1"/>
</dbReference>
<dbReference type="SMR" id="Q3AMA6"/>
<dbReference type="STRING" id="110662.Syncc9605_0502"/>
<dbReference type="KEGG" id="syd:Syncc9605_0502"/>
<dbReference type="eggNOG" id="COG0757">
    <property type="taxonomic scope" value="Bacteria"/>
</dbReference>
<dbReference type="HOGENOM" id="CLU_090968_1_0_3"/>
<dbReference type="OrthoDB" id="9790793at2"/>
<dbReference type="UniPathway" id="UPA00053">
    <property type="reaction ID" value="UER00086"/>
</dbReference>
<dbReference type="GO" id="GO:0003855">
    <property type="term" value="F:3-dehydroquinate dehydratase activity"/>
    <property type="evidence" value="ECO:0007669"/>
    <property type="project" value="UniProtKB-UniRule"/>
</dbReference>
<dbReference type="GO" id="GO:0008652">
    <property type="term" value="P:amino acid biosynthetic process"/>
    <property type="evidence" value="ECO:0007669"/>
    <property type="project" value="UniProtKB-KW"/>
</dbReference>
<dbReference type="GO" id="GO:0009073">
    <property type="term" value="P:aromatic amino acid family biosynthetic process"/>
    <property type="evidence" value="ECO:0007669"/>
    <property type="project" value="UniProtKB-KW"/>
</dbReference>
<dbReference type="GO" id="GO:0009423">
    <property type="term" value="P:chorismate biosynthetic process"/>
    <property type="evidence" value="ECO:0007669"/>
    <property type="project" value="UniProtKB-UniRule"/>
</dbReference>
<dbReference type="GO" id="GO:0019631">
    <property type="term" value="P:quinate catabolic process"/>
    <property type="evidence" value="ECO:0007669"/>
    <property type="project" value="TreeGrafter"/>
</dbReference>
<dbReference type="CDD" id="cd00466">
    <property type="entry name" value="DHQase_II"/>
    <property type="match status" value="1"/>
</dbReference>
<dbReference type="Gene3D" id="3.40.50.9100">
    <property type="entry name" value="Dehydroquinase, class II"/>
    <property type="match status" value="1"/>
</dbReference>
<dbReference type="HAMAP" id="MF_00169">
    <property type="entry name" value="AroQ"/>
    <property type="match status" value="1"/>
</dbReference>
<dbReference type="InterPro" id="IPR001874">
    <property type="entry name" value="DHquinase_II"/>
</dbReference>
<dbReference type="InterPro" id="IPR018509">
    <property type="entry name" value="DHquinase_II_CS"/>
</dbReference>
<dbReference type="InterPro" id="IPR036441">
    <property type="entry name" value="DHquinase_II_sf"/>
</dbReference>
<dbReference type="NCBIfam" id="TIGR01088">
    <property type="entry name" value="aroQ"/>
    <property type="match status" value="1"/>
</dbReference>
<dbReference type="NCBIfam" id="NF003804">
    <property type="entry name" value="PRK05395.1-1"/>
    <property type="match status" value="1"/>
</dbReference>
<dbReference type="NCBIfam" id="NF003805">
    <property type="entry name" value="PRK05395.1-2"/>
    <property type="match status" value="1"/>
</dbReference>
<dbReference type="NCBIfam" id="NF003806">
    <property type="entry name" value="PRK05395.1-3"/>
    <property type="match status" value="1"/>
</dbReference>
<dbReference type="NCBIfam" id="NF003807">
    <property type="entry name" value="PRK05395.1-4"/>
    <property type="match status" value="1"/>
</dbReference>
<dbReference type="PANTHER" id="PTHR21272">
    <property type="entry name" value="CATABOLIC 3-DEHYDROQUINASE"/>
    <property type="match status" value="1"/>
</dbReference>
<dbReference type="PANTHER" id="PTHR21272:SF3">
    <property type="entry name" value="CATABOLIC 3-DEHYDROQUINASE"/>
    <property type="match status" value="1"/>
</dbReference>
<dbReference type="Pfam" id="PF01220">
    <property type="entry name" value="DHquinase_II"/>
    <property type="match status" value="1"/>
</dbReference>
<dbReference type="PIRSF" id="PIRSF001399">
    <property type="entry name" value="DHquinase_II"/>
    <property type="match status" value="1"/>
</dbReference>
<dbReference type="SUPFAM" id="SSF52304">
    <property type="entry name" value="Type II 3-dehydroquinate dehydratase"/>
    <property type="match status" value="1"/>
</dbReference>
<dbReference type="PROSITE" id="PS01029">
    <property type="entry name" value="DEHYDROQUINASE_II"/>
    <property type="match status" value="1"/>
</dbReference>
<sequence>MHVLLLNGPNLNLLGQREPGIYGHSSLADIEAALTREAEQESVQLDCFQSNFEGALVDRIHQAMGRCDGILINAGAYTHTSIAIRDALAGVAIPYVEVHLSNTHARENFRHHSFLAERAVGVICGFGPASYSFALNGLLSHLRRNA</sequence>
<organism>
    <name type="scientific">Synechococcus sp. (strain CC9605)</name>
    <dbReference type="NCBI Taxonomy" id="110662"/>
    <lineage>
        <taxon>Bacteria</taxon>
        <taxon>Bacillati</taxon>
        <taxon>Cyanobacteriota</taxon>
        <taxon>Cyanophyceae</taxon>
        <taxon>Synechococcales</taxon>
        <taxon>Synechococcaceae</taxon>
        <taxon>Synechococcus</taxon>
    </lineage>
</organism>
<accession>Q3AMA6</accession>
<evidence type="ECO:0000255" key="1">
    <source>
        <dbReference type="HAMAP-Rule" id="MF_00169"/>
    </source>
</evidence>
<name>AROQ_SYNSC</name>
<proteinExistence type="inferred from homology"/>
<reference key="1">
    <citation type="submission" date="2005-07" db="EMBL/GenBank/DDBJ databases">
        <title>Complete sequence of Synechococcus sp. CC9605.</title>
        <authorList>
            <consortium name="US DOE Joint Genome Institute"/>
            <person name="Copeland A."/>
            <person name="Lucas S."/>
            <person name="Lapidus A."/>
            <person name="Barry K."/>
            <person name="Detter J.C."/>
            <person name="Glavina T."/>
            <person name="Hammon N."/>
            <person name="Israni S."/>
            <person name="Pitluck S."/>
            <person name="Schmutz J."/>
            <person name="Martinez M."/>
            <person name="Larimer F."/>
            <person name="Land M."/>
            <person name="Kyrpides N."/>
            <person name="Ivanova N."/>
            <person name="Richardson P."/>
        </authorList>
    </citation>
    <scope>NUCLEOTIDE SEQUENCE [LARGE SCALE GENOMIC DNA]</scope>
    <source>
        <strain>CC9605</strain>
    </source>
</reference>
<protein>
    <recommendedName>
        <fullName evidence="1">3-dehydroquinate dehydratase</fullName>
        <shortName evidence="1">3-dehydroquinase</shortName>
        <ecNumber evidence="1">4.2.1.10</ecNumber>
    </recommendedName>
    <alternativeName>
        <fullName evidence="1">Type II DHQase</fullName>
    </alternativeName>
</protein>
<comment type="function">
    <text evidence="1">Catalyzes a trans-dehydration via an enolate intermediate.</text>
</comment>
<comment type="catalytic activity">
    <reaction evidence="1">
        <text>3-dehydroquinate = 3-dehydroshikimate + H2O</text>
        <dbReference type="Rhea" id="RHEA:21096"/>
        <dbReference type="ChEBI" id="CHEBI:15377"/>
        <dbReference type="ChEBI" id="CHEBI:16630"/>
        <dbReference type="ChEBI" id="CHEBI:32364"/>
        <dbReference type="EC" id="4.2.1.10"/>
    </reaction>
</comment>
<comment type="pathway">
    <text evidence="1">Metabolic intermediate biosynthesis; chorismate biosynthesis; chorismate from D-erythrose 4-phosphate and phosphoenolpyruvate: step 3/7.</text>
</comment>
<comment type="subunit">
    <text evidence="1">Homododecamer.</text>
</comment>
<comment type="similarity">
    <text evidence="1">Belongs to the type-II 3-dehydroquinase family.</text>
</comment>
<feature type="chain" id="PRO_1000023526" description="3-dehydroquinate dehydratase">
    <location>
        <begin position="1"/>
        <end position="146"/>
    </location>
</feature>
<feature type="active site" description="Proton acceptor" evidence="1">
    <location>
        <position position="22"/>
    </location>
</feature>
<feature type="active site" description="Proton donor" evidence="1">
    <location>
        <position position="99"/>
    </location>
</feature>
<feature type="binding site" evidence="1">
    <location>
        <position position="73"/>
    </location>
    <ligand>
        <name>substrate</name>
    </ligand>
</feature>
<feature type="binding site" evidence="1">
    <location>
        <position position="79"/>
    </location>
    <ligand>
        <name>substrate</name>
    </ligand>
</feature>
<feature type="binding site" evidence="1">
    <location>
        <position position="86"/>
    </location>
    <ligand>
        <name>substrate</name>
    </ligand>
</feature>
<feature type="binding site" evidence="1">
    <location>
        <begin position="100"/>
        <end position="101"/>
    </location>
    <ligand>
        <name>substrate</name>
    </ligand>
</feature>
<feature type="binding site" evidence="1">
    <location>
        <position position="110"/>
    </location>
    <ligand>
        <name>substrate</name>
    </ligand>
</feature>
<feature type="site" description="Transition state stabilizer" evidence="1">
    <location>
        <position position="17"/>
    </location>
</feature>
<gene>
    <name evidence="1" type="primary">aroQ</name>
    <name type="ordered locus">Syncc9605_0502</name>
</gene>